<gene>
    <name evidence="1" type="primary">leuS</name>
    <name type="ordered locus">SPA2086</name>
</gene>
<comment type="catalytic activity">
    <reaction evidence="1">
        <text>tRNA(Leu) + L-leucine + ATP = L-leucyl-tRNA(Leu) + AMP + diphosphate</text>
        <dbReference type="Rhea" id="RHEA:11688"/>
        <dbReference type="Rhea" id="RHEA-COMP:9613"/>
        <dbReference type="Rhea" id="RHEA-COMP:9622"/>
        <dbReference type="ChEBI" id="CHEBI:30616"/>
        <dbReference type="ChEBI" id="CHEBI:33019"/>
        <dbReference type="ChEBI" id="CHEBI:57427"/>
        <dbReference type="ChEBI" id="CHEBI:78442"/>
        <dbReference type="ChEBI" id="CHEBI:78494"/>
        <dbReference type="ChEBI" id="CHEBI:456215"/>
        <dbReference type="EC" id="6.1.1.4"/>
    </reaction>
</comment>
<comment type="subcellular location">
    <subcellularLocation>
        <location evidence="1">Cytoplasm</location>
    </subcellularLocation>
</comment>
<comment type="similarity">
    <text evidence="1">Belongs to the class-I aminoacyl-tRNA synthetase family.</text>
</comment>
<evidence type="ECO:0000255" key="1">
    <source>
        <dbReference type="HAMAP-Rule" id="MF_00049"/>
    </source>
</evidence>
<protein>
    <recommendedName>
        <fullName evidence="1">Leucine--tRNA ligase</fullName>
        <ecNumber evidence="1">6.1.1.4</ecNumber>
    </recommendedName>
    <alternativeName>
        <fullName evidence="1">Leucyl-tRNA synthetase</fullName>
        <shortName evidence="1">LeuRS</shortName>
    </alternativeName>
</protein>
<proteinExistence type="inferred from homology"/>
<sequence length="860" mass="96986">MQEQYRPEEIESKVQLHWDEKRTFEVTEDESKEKYYCLSMLPYPSGRLHMGHVRNYTIGDVVARYQRMLGKNVLQPIGWDAFGLPAEGAAVKNNTAPAPWTYDNIAYMKNQLKTLGFGYDWSREIATCTPEYYRWEQKFFTELYKKGLVYKKTSAVNWCPNDQTVLANEQVIDGCCWRCDTKVERKEIPQWFIKITAYADELLRDLDKLDHWPDTVKTMQRNWIGRSEGVEITFDVKGYDNTLIVYTTRPDTFMGATYLAVAAGHPLAQKAAANNAELAAFVDECRNTKVAEAEMATMEKKGVDTGYKAIHPLTGEEIPVWAANFVLMEYGTGAVMAVPGHDQRDYEFASKYGLTIKPVILAADGSEPDLSEQALTEKGVLFNSGEFDGLAFEAAFNAIADKLAEKGVGERKVNYRLRDWGVSRQRYWGAPIPMITQEDGTVLPTPEDQLPVILPEDVVMDGITSPIKADPEWAKTTVNGMPALRETDTFDTFMESSWYYARYTCPQYQEGMLDSKAANYWLPVDIYIGGIEHAIMHLLYFRFFHKLMRDAGMVTSDEPAKQLLCQGMVLADAFYYVGENGERNWVSPVDAIVERDEKGRIVKAKDAAGHELVYTGMSKMSKSKNNGIDPQVMVERYGADTVRLFMMFASPADMTLEWQESGVEGANRFIKRVWKLVYEHTAKGPVAALNVDALSEDQKALRRDVHKTIAKVTDDIGRRQTFNTAIAAIMELMNKLAKAPQEGEQDRALLQEALQAVVRMLNPFTPHVCFTLWQELGGEGDIDNAPWPVADEQAMVENTTLVVVQVNGKVRGKITVAVDATEEQVRERAGQEHLVAKYLDGVTVRKVIYVPGKLLNLVVG</sequence>
<organism>
    <name type="scientific">Salmonella paratyphi A (strain ATCC 9150 / SARB42)</name>
    <dbReference type="NCBI Taxonomy" id="295319"/>
    <lineage>
        <taxon>Bacteria</taxon>
        <taxon>Pseudomonadati</taxon>
        <taxon>Pseudomonadota</taxon>
        <taxon>Gammaproteobacteria</taxon>
        <taxon>Enterobacterales</taxon>
        <taxon>Enterobacteriaceae</taxon>
        <taxon>Salmonella</taxon>
    </lineage>
</organism>
<feature type="chain" id="PRO_1000009422" description="Leucine--tRNA ligase">
    <location>
        <begin position="1"/>
        <end position="860"/>
    </location>
</feature>
<feature type="short sequence motif" description="'HIGH' region">
    <location>
        <begin position="42"/>
        <end position="52"/>
    </location>
</feature>
<feature type="short sequence motif" description="'KMSKS' region">
    <location>
        <begin position="619"/>
        <end position="623"/>
    </location>
</feature>
<feature type="binding site" evidence="1">
    <location>
        <position position="622"/>
    </location>
    <ligand>
        <name>ATP</name>
        <dbReference type="ChEBI" id="CHEBI:30616"/>
    </ligand>
</feature>
<name>SYL_SALPA</name>
<keyword id="KW-0030">Aminoacyl-tRNA synthetase</keyword>
<keyword id="KW-0067">ATP-binding</keyword>
<keyword id="KW-0963">Cytoplasm</keyword>
<keyword id="KW-0436">Ligase</keyword>
<keyword id="KW-0547">Nucleotide-binding</keyword>
<keyword id="KW-0648">Protein biosynthesis</keyword>
<accession>Q5PM88</accession>
<dbReference type="EC" id="6.1.1.4" evidence="1"/>
<dbReference type="EMBL" id="CP000026">
    <property type="protein sequence ID" value="AAV77980.1"/>
    <property type="molecule type" value="Genomic_DNA"/>
</dbReference>
<dbReference type="RefSeq" id="WP_001157911.1">
    <property type="nucleotide sequence ID" value="NC_006511.1"/>
</dbReference>
<dbReference type="SMR" id="Q5PM88"/>
<dbReference type="KEGG" id="spt:SPA2086"/>
<dbReference type="HOGENOM" id="CLU_004427_0_0_6"/>
<dbReference type="Proteomes" id="UP000008185">
    <property type="component" value="Chromosome"/>
</dbReference>
<dbReference type="GO" id="GO:0005829">
    <property type="term" value="C:cytosol"/>
    <property type="evidence" value="ECO:0007669"/>
    <property type="project" value="TreeGrafter"/>
</dbReference>
<dbReference type="GO" id="GO:0002161">
    <property type="term" value="F:aminoacyl-tRNA deacylase activity"/>
    <property type="evidence" value="ECO:0007669"/>
    <property type="project" value="InterPro"/>
</dbReference>
<dbReference type="GO" id="GO:0005524">
    <property type="term" value="F:ATP binding"/>
    <property type="evidence" value="ECO:0007669"/>
    <property type="project" value="UniProtKB-UniRule"/>
</dbReference>
<dbReference type="GO" id="GO:0004823">
    <property type="term" value="F:leucine-tRNA ligase activity"/>
    <property type="evidence" value="ECO:0007669"/>
    <property type="project" value="UniProtKB-UniRule"/>
</dbReference>
<dbReference type="GO" id="GO:0006429">
    <property type="term" value="P:leucyl-tRNA aminoacylation"/>
    <property type="evidence" value="ECO:0007669"/>
    <property type="project" value="UniProtKB-UniRule"/>
</dbReference>
<dbReference type="CDD" id="cd07958">
    <property type="entry name" value="Anticodon_Ia_Leu_BEm"/>
    <property type="match status" value="1"/>
</dbReference>
<dbReference type="CDD" id="cd00812">
    <property type="entry name" value="LeuRS_core"/>
    <property type="match status" value="1"/>
</dbReference>
<dbReference type="FunFam" id="1.10.730.10:FF:000002">
    <property type="entry name" value="Leucine--tRNA ligase"/>
    <property type="match status" value="2"/>
</dbReference>
<dbReference type="FunFam" id="2.20.28.290:FF:000001">
    <property type="entry name" value="Leucine--tRNA ligase"/>
    <property type="match status" value="1"/>
</dbReference>
<dbReference type="FunFam" id="3.10.20.590:FF:000001">
    <property type="entry name" value="Leucine--tRNA ligase"/>
    <property type="match status" value="1"/>
</dbReference>
<dbReference type="FunFam" id="3.40.50.620:FF:000003">
    <property type="entry name" value="Leucine--tRNA ligase"/>
    <property type="match status" value="1"/>
</dbReference>
<dbReference type="FunFam" id="3.40.50.620:FF:000124">
    <property type="entry name" value="Leucine--tRNA ligase"/>
    <property type="match status" value="1"/>
</dbReference>
<dbReference type="FunFam" id="3.90.740.10:FF:000012">
    <property type="entry name" value="Leucine--tRNA ligase"/>
    <property type="match status" value="1"/>
</dbReference>
<dbReference type="Gene3D" id="2.20.28.290">
    <property type="match status" value="1"/>
</dbReference>
<dbReference type="Gene3D" id="3.10.20.590">
    <property type="match status" value="1"/>
</dbReference>
<dbReference type="Gene3D" id="3.40.50.620">
    <property type="entry name" value="HUPs"/>
    <property type="match status" value="2"/>
</dbReference>
<dbReference type="Gene3D" id="1.10.730.10">
    <property type="entry name" value="Isoleucyl-tRNA Synthetase, Domain 1"/>
    <property type="match status" value="1"/>
</dbReference>
<dbReference type="Gene3D" id="3.90.740.10">
    <property type="entry name" value="Valyl/Leucyl/Isoleucyl-tRNA synthetase, editing domain"/>
    <property type="match status" value="1"/>
</dbReference>
<dbReference type="HAMAP" id="MF_00049_B">
    <property type="entry name" value="Leu_tRNA_synth_B"/>
    <property type="match status" value="1"/>
</dbReference>
<dbReference type="InterPro" id="IPR001412">
    <property type="entry name" value="aa-tRNA-synth_I_CS"/>
</dbReference>
<dbReference type="InterPro" id="IPR002300">
    <property type="entry name" value="aa-tRNA-synth_Ia"/>
</dbReference>
<dbReference type="InterPro" id="IPR002302">
    <property type="entry name" value="Leu-tRNA-ligase"/>
</dbReference>
<dbReference type="InterPro" id="IPR025709">
    <property type="entry name" value="Leu_tRNA-synth_edit"/>
</dbReference>
<dbReference type="InterPro" id="IPR013155">
    <property type="entry name" value="M/V/L/I-tRNA-synth_anticd-bd"/>
</dbReference>
<dbReference type="InterPro" id="IPR015413">
    <property type="entry name" value="Methionyl/Leucyl_tRNA_Synth"/>
</dbReference>
<dbReference type="InterPro" id="IPR014729">
    <property type="entry name" value="Rossmann-like_a/b/a_fold"/>
</dbReference>
<dbReference type="InterPro" id="IPR009080">
    <property type="entry name" value="tRNAsynth_Ia_anticodon-bd"/>
</dbReference>
<dbReference type="InterPro" id="IPR009008">
    <property type="entry name" value="Val/Leu/Ile-tRNA-synth_edit"/>
</dbReference>
<dbReference type="NCBIfam" id="TIGR00396">
    <property type="entry name" value="leuS_bact"/>
    <property type="match status" value="1"/>
</dbReference>
<dbReference type="PANTHER" id="PTHR43740:SF2">
    <property type="entry name" value="LEUCINE--TRNA LIGASE, MITOCHONDRIAL"/>
    <property type="match status" value="1"/>
</dbReference>
<dbReference type="PANTHER" id="PTHR43740">
    <property type="entry name" value="LEUCYL-TRNA SYNTHETASE"/>
    <property type="match status" value="1"/>
</dbReference>
<dbReference type="Pfam" id="PF08264">
    <property type="entry name" value="Anticodon_1"/>
    <property type="match status" value="1"/>
</dbReference>
<dbReference type="Pfam" id="PF00133">
    <property type="entry name" value="tRNA-synt_1"/>
    <property type="match status" value="2"/>
</dbReference>
<dbReference type="Pfam" id="PF13603">
    <property type="entry name" value="tRNA-synt_1_2"/>
    <property type="match status" value="1"/>
</dbReference>
<dbReference type="Pfam" id="PF09334">
    <property type="entry name" value="tRNA-synt_1g"/>
    <property type="match status" value="1"/>
</dbReference>
<dbReference type="PRINTS" id="PR00985">
    <property type="entry name" value="TRNASYNTHLEU"/>
</dbReference>
<dbReference type="SUPFAM" id="SSF47323">
    <property type="entry name" value="Anticodon-binding domain of a subclass of class I aminoacyl-tRNA synthetases"/>
    <property type="match status" value="1"/>
</dbReference>
<dbReference type="SUPFAM" id="SSF52374">
    <property type="entry name" value="Nucleotidylyl transferase"/>
    <property type="match status" value="1"/>
</dbReference>
<dbReference type="SUPFAM" id="SSF50677">
    <property type="entry name" value="ValRS/IleRS/LeuRS editing domain"/>
    <property type="match status" value="1"/>
</dbReference>
<dbReference type="PROSITE" id="PS00178">
    <property type="entry name" value="AA_TRNA_LIGASE_I"/>
    <property type="match status" value="1"/>
</dbReference>
<reference key="1">
    <citation type="journal article" date="2004" name="Nat. Genet.">
        <title>Comparison of genome degradation in Paratyphi A and Typhi, human-restricted serovars of Salmonella enterica that cause typhoid.</title>
        <authorList>
            <person name="McClelland M."/>
            <person name="Sanderson K.E."/>
            <person name="Clifton S.W."/>
            <person name="Latreille P."/>
            <person name="Porwollik S."/>
            <person name="Sabo A."/>
            <person name="Meyer R."/>
            <person name="Bieri T."/>
            <person name="Ozersky P."/>
            <person name="McLellan M."/>
            <person name="Harkins C.R."/>
            <person name="Wang C."/>
            <person name="Nguyen C."/>
            <person name="Berghoff A."/>
            <person name="Elliott G."/>
            <person name="Kohlberg S."/>
            <person name="Strong C."/>
            <person name="Du F."/>
            <person name="Carter J."/>
            <person name="Kremizki C."/>
            <person name="Layman D."/>
            <person name="Leonard S."/>
            <person name="Sun H."/>
            <person name="Fulton L."/>
            <person name="Nash W."/>
            <person name="Miner T."/>
            <person name="Minx P."/>
            <person name="Delehaunty K."/>
            <person name="Fronick C."/>
            <person name="Magrini V."/>
            <person name="Nhan M."/>
            <person name="Warren W."/>
            <person name="Florea L."/>
            <person name="Spieth J."/>
            <person name="Wilson R.K."/>
        </authorList>
    </citation>
    <scope>NUCLEOTIDE SEQUENCE [LARGE SCALE GENOMIC DNA]</scope>
    <source>
        <strain>ATCC 9150 / SARB42</strain>
    </source>
</reference>